<dbReference type="EC" id="3.1.3.25" evidence="3"/>
<dbReference type="EMBL" id="AE002098">
    <property type="protein sequence ID" value="AAF41721.1"/>
    <property type="molecule type" value="Genomic_DNA"/>
</dbReference>
<dbReference type="PIR" id="F81092">
    <property type="entry name" value="F81092"/>
</dbReference>
<dbReference type="RefSeq" id="NP_274365.1">
    <property type="nucleotide sequence ID" value="NC_003112.2"/>
</dbReference>
<dbReference type="RefSeq" id="WP_002222348.1">
    <property type="nucleotide sequence ID" value="NC_003112.2"/>
</dbReference>
<dbReference type="SMR" id="Q9JZ07"/>
<dbReference type="FunCoup" id="Q9JZ07">
    <property type="interactions" value="423"/>
</dbReference>
<dbReference type="STRING" id="122586.NMB1347"/>
<dbReference type="PaxDb" id="122586-NMB1347"/>
<dbReference type="KEGG" id="nme:NMB1347"/>
<dbReference type="PATRIC" id="fig|122586.8.peg.1686"/>
<dbReference type="HOGENOM" id="CLU_044118_0_4_4"/>
<dbReference type="InParanoid" id="Q9JZ07"/>
<dbReference type="OrthoDB" id="9785695at2"/>
<dbReference type="Proteomes" id="UP000000425">
    <property type="component" value="Chromosome"/>
</dbReference>
<dbReference type="GO" id="GO:0005737">
    <property type="term" value="C:cytoplasm"/>
    <property type="evidence" value="ECO:0007669"/>
    <property type="project" value="UniProtKB-SubCell"/>
</dbReference>
<dbReference type="GO" id="GO:0008934">
    <property type="term" value="F:inositol monophosphate 1-phosphatase activity"/>
    <property type="evidence" value="ECO:0000318"/>
    <property type="project" value="GO_Central"/>
</dbReference>
<dbReference type="GO" id="GO:0046872">
    <property type="term" value="F:metal ion binding"/>
    <property type="evidence" value="ECO:0007669"/>
    <property type="project" value="UniProtKB-KW"/>
</dbReference>
<dbReference type="GO" id="GO:0003723">
    <property type="term" value="F:RNA binding"/>
    <property type="evidence" value="ECO:0007669"/>
    <property type="project" value="UniProtKB-KW"/>
</dbReference>
<dbReference type="GO" id="GO:0006020">
    <property type="term" value="P:inositol metabolic process"/>
    <property type="evidence" value="ECO:0000318"/>
    <property type="project" value="GO_Central"/>
</dbReference>
<dbReference type="GO" id="GO:0046854">
    <property type="term" value="P:phosphatidylinositol phosphate biosynthetic process"/>
    <property type="evidence" value="ECO:0007669"/>
    <property type="project" value="InterPro"/>
</dbReference>
<dbReference type="GO" id="GO:0042254">
    <property type="term" value="P:ribosome biogenesis"/>
    <property type="evidence" value="ECO:0007669"/>
    <property type="project" value="UniProtKB-KW"/>
</dbReference>
<dbReference type="GO" id="GO:0007165">
    <property type="term" value="P:signal transduction"/>
    <property type="evidence" value="ECO:0000318"/>
    <property type="project" value="GO_Central"/>
</dbReference>
<dbReference type="GO" id="GO:0031564">
    <property type="term" value="P:transcription antitermination"/>
    <property type="evidence" value="ECO:0007669"/>
    <property type="project" value="UniProtKB-KW"/>
</dbReference>
<dbReference type="CDD" id="cd01639">
    <property type="entry name" value="IMPase"/>
    <property type="match status" value="1"/>
</dbReference>
<dbReference type="FunFam" id="3.30.540.10:FF:000013">
    <property type="entry name" value="Inositol-1-monophosphatase"/>
    <property type="match status" value="1"/>
</dbReference>
<dbReference type="FunFam" id="3.40.190.80:FF:000002">
    <property type="entry name" value="Inositol-1-monophosphatase"/>
    <property type="match status" value="1"/>
</dbReference>
<dbReference type="Gene3D" id="3.40.190.80">
    <property type="match status" value="1"/>
</dbReference>
<dbReference type="Gene3D" id="3.30.540.10">
    <property type="entry name" value="Fructose-1,6-Bisphosphatase, subunit A, domain 1"/>
    <property type="match status" value="1"/>
</dbReference>
<dbReference type="InterPro" id="IPR033942">
    <property type="entry name" value="IMPase"/>
</dbReference>
<dbReference type="InterPro" id="IPR020583">
    <property type="entry name" value="Inositol_monoP_metal-BS"/>
</dbReference>
<dbReference type="InterPro" id="IPR000760">
    <property type="entry name" value="Inositol_monophosphatase-like"/>
</dbReference>
<dbReference type="InterPro" id="IPR020550">
    <property type="entry name" value="Inositol_monophosphatase_CS"/>
</dbReference>
<dbReference type="InterPro" id="IPR022337">
    <property type="entry name" value="Inositol_monophosphatase_SuhB"/>
</dbReference>
<dbReference type="PANTHER" id="PTHR20854">
    <property type="entry name" value="INOSITOL MONOPHOSPHATASE"/>
    <property type="match status" value="1"/>
</dbReference>
<dbReference type="PANTHER" id="PTHR20854:SF4">
    <property type="entry name" value="INOSITOL-1-MONOPHOSPHATASE-RELATED"/>
    <property type="match status" value="1"/>
</dbReference>
<dbReference type="Pfam" id="PF00459">
    <property type="entry name" value="Inositol_P"/>
    <property type="match status" value="1"/>
</dbReference>
<dbReference type="PRINTS" id="PR00377">
    <property type="entry name" value="IMPHPHTASES"/>
</dbReference>
<dbReference type="PRINTS" id="PR01959">
    <property type="entry name" value="SBIMPHPHTASE"/>
</dbReference>
<dbReference type="SUPFAM" id="SSF56655">
    <property type="entry name" value="Carbohydrate phosphatase"/>
    <property type="match status" value="1"/>
</dbReference>
<dbReference type="PROSITE" id="PS00629">
    <property type="entry name" value="IMP_1"/>
    <property type="match status" value="1"/>
</dbReference>
<dbReference type="PROSITE" id="PS00630">
    <property type="entry name" value="IMP_2"/>
    <property type="match status" value="1"/>
</dbReference>
<organism>
    <name type="scientific">Neisseria meningitidis serogroup B (strain ATCC BAA-335 / MC58)</name>
    <dbReference type="NCBI Taxonomy" id="122586"/>
    <lineage>
        <taxon>Bacteria</taxon>
        <taxon>Pseudomonadati</taxon>
        <taxon>Pseudomonadota</taxon>
        <taxon>Betaproteobacteria</taxon>
        <taxon>Neisseriales</taxon>
        <taxon>Neisseriaceae</taxon>
        <taxon>Neisseria</taxon>
    </lineage>
</organism>
<gene>
    <name type="primary">suhB</name>
    <name type="ordered locus">NMB1347</name>
</gene>
<proteinExistence type="inferred from homology"/>
<evidence type="ECO:0000250" key="1"/>
<evidence type="ECO:0000250" key="2">
    <source>
        <dbReference type="UniProtKB" id="B4ED80"/>
    </source>
</evidence>
<evidence type="ECO:0000250" key="3">
    <source>
        <dbReference type="UniProtKB" id="P0ADG4"/>
    </source>
</evidence>
<evidence type="ECO:0000305" key="4"/>
<name>SUHB_NEIMB</name>
<sequence>MNPFLNTAFKAARRAGQMMIRAAGNLDAVKTDSKAFNDFVSDVDRNSEIILVEALKEAYPHHKITCEESGSHGKAAAEYEWIIDPLDGTTNFLHGHPQYAISMALLHKGVLQEALVYAPERNDVYMASRGKGALLNDRRIRVSNRIELNRCLIGTGFPVVDQSMMDKYLAILKDFLAKTAGGRREGAASLDLCAVATGRFDGFFEFNLKPWDIAAGALIVQEAGGIVTDMSGEDGWLESGDIVAANPKVLAQMLKIISAHV</sequence>
<comment type="function">
    <text evidence="2 3">Might be part of the processive rRNA transcription and antitermination complex (rrnTAC). The complex forms an RNA-chaperone ring around the RNA exit tunnel of RNA polymerase (RNAP). It supports rapid transcription and antitermination of rRNA operons, cotranscriptional rRNA folding, and annealing of distal rRNA regions to allow correct ribosome biogenesis. This subunit may play a central role in organizing the structure.</text>
</comment>
<comment type="catalytic activity">
    <reaction evidence="3">
        <text>a myo-inositol phosphate + H2O = myo-inositol + phosphate</text>
        <dbReference type="Rhea" id="RHEA:24056"/>
        <dbReference type="ChEBI" id="CHEBI:15377"/>
        <dbReference type="ChEBI" id="CHEBI:17268"/>
        <dbReference type="ChEBI" id="CHEBI:43474"/>
        <dbReference type="ChEBI" id="CHEBI:84139"/>
        <dbReference type="EC" id="3.1.3.25"/>
    </reaction>
</comment>
<comment type="cofactor">
    <cofactor evidence="3">
        <name>Mg(2+)</name>
        <dbReference type="ChEBI" id="CHEBI:18420"/>
    </cofactor>
</comment>
<comment type="subunit">
    <text evidence="3">Homodimer. The rRNA transcription and antitermination complex (rrnTAC) consists of RNA polymerase (RNAP), NusA, NusB, NusE (rpsJ), NusG, SubB, ribosomal protein S4, DNA and precursor rRNA; S4 is more flexible than other subunits.</text>
</comment>
<comment type="subcellular location">
    <subcellularLocation>
        <location evidence="3">Cytoplasm</location>
    </subcellularLocation>
</comment>
<comment type="similarity">
    <text evidence="4">Belongs to the inositol monophosphatase superfamily.</text>
</comment>
<reference key="1">
    <citation type="journal article" date="2000" name="Science">
        <title>Complete genome sequence of Neisseria meningitidis serogroup B strain MC58.</title>
        <authorList>
            <person name="Tettelin H."/>
            <person name="Saunders N.J."/>
            <person name="Heidelberg J.F."/>
            <person name="Jeffries A.C."/>
            <person name="Nelson K.E."/>
            <person name="Eisen J.A."/>
            <person name="Ketchum K.A."/>
            <person name="Hood D.W."/>
            <person name="Peden J.F."/>
            <person name="Dodson R.J."/>
            <person name="Nelson W.C."/>
            <person name="Gwinn M.L."/>
            <person name="DeBoy R.T."/>
            <person name="Peterson J.D."/>
            <person name="Hickey E.K."/>
            <person name="Haft D.H."/>
            <person name="Salzberg S.L."/>
            <person name="White O."/>
            <person name="Fleischmann R.D."/>
            <person name="Dougherty B.A."/>
            <person name="Mason T.M."/>
            <person name="Ciecko A."/>
            <person name="Parksey D.S."/>
            <person name="Blair E."/>
            <person name="Cittone H."/>
            <person name="Clark E.B."/>
            <person name="Cotton M.D."/>
            <person name="Utterback T.R."/>
            <person name="Khouri H.M."/>
            <person name="Qin H."/>
            <person name="Vamathevan J.J."/>
            <person name="Gill J."/>
            <person name="Scarlato V."/>
            <person name="Masignani V."/>
            <person name="Pizza M."/>
            <person name="Grandi G."/>
            <person name="Sun L."/>
            <person name="Smith H.O."/>
            <person name="Fraser C.M."/>
            <person name="Moxon E.R."/>
            <person name="Rappuoli R."/>
            <person name="Venter J.C."/>
        </authorList>
    </citation>
    <scope>NUCLEOTIDE SEQUENCE [LARGE SCALE GENOMIC DNA]</scope>
    <source>
        <strain>ATCC BAA-335 / MC58</strain>
    </source>
</reference>
<accession>Q9JZ07</accession>
<protein>
    <recommendedName>
        <fullName evidence="2">Putative Nus factor SuhB</fullName>
    </recommendedName>
    <alternativeName>
        <fullName>Inositol-1-monophosphatase</fullName>
        <shortName>I-1-Pase</shortName>
        <shortName>IMPase</shortName>
        <shortName>Inositol-1-phosphatase</shortName>
        <ecNumber evidence="3">3.1.3.25</ecNumber>
    </alternativeName>
</protein>
<keyword id="KW-0143">Chaperone</keyword>
<keyword id="KW-0963">Cytoplasm</keyword>
<keyword id="KW-0378">Hydrolase</keyword>
<keyword id="KW-0460">Magnesium</keyword>
<keyword id="KW-0479">Metal-binding</keyword>
<keyword id="KW-1185">Reference proteome</keyword>
<keyword id="KW-0690">Ribosome biogenesis</keyword>
<keyword id="KW-0694">RNA-binding</keyword>
<keyword id="KW-0804">Transcription</keyword>
<keyword id="KW-0889">Transcription antitermination</keyword>
<keyword id="KW-0805">Transcription regulation</keyword>
<feature type="chain" id="PRO_0000142567" description="Putative Nus factor SuhB">
    <location>
        <begin position="1"/>
        <end position="261"/>
    </location>
</feature>
<feature type="binding site" evidence="3">
    <location>
        <position position="67"/>
    </location>
    <ligand>
        <name>Mg(2+)</name>
        <dbReference type="ChEBI" id="CHEBI:18420"/>
    </ligand>
</feature>
<feature type="binding site" evidence="1">
    <location>
        <position position="67"/>
    </location>
    <ligand>
        <name>substrate</name>
    </ligand>
</feature>
<feature type="binding site" evidence="3">
    <location>
        <position position="84"/>
    </location>
    <ligand>
        <name>Mg(2+)</name>
        <dbReference type="ChEBI" id="CHEBI:18420"/>
    </ligand>
</feature>
<feature type="binding site" evidence="1">
    <location>
        <begin position="86"/>
        <end position="89"/>
    </location>
    <ligand>
        <name>substrate</name>
    </ligand>
</feature>
<feature type="binding site" evidence="3">
    <location>
        <position position="86"/>
    </location>
    <ligand>
        <name>Mg(2+)</name>
        <dbReference type="ChEBI" id="CHEBI:18420"/>
    </ligand>
</feature>
<feature type="binding site" evidence="1">
    <location>
        <position position="183"/>
    </location>
    <ligand>
        <name>substrate</name>
    </ligand>
</feature>
<feature type="binding site" evidence="1">
    <location>
        <position position="212"/>
    </location>
    <ligand>
        <name>substrate</name>
    </ligand>
</feature>